<protein>
    <recommendedName>
        <fullName>Myoglobin</fullName>
    </recommendedName>
    <alternativeName>
        <fullName evidence="1">Nitrite reductase MB</fullName>
        <ecNumber evidence="1">1.7.-.-</ecNumber>
    </alternativeName>
    <alternativeName>
        <fullName evidence="1">Pseudoperoxidase MB</fullName>
        <ecNumber evidence="1">1.11.1.-</ecNumber>
    </alternativeName>
</protein>
<evidence type="ECO:0000250" key="1">
    <source>
        <dbReference type="UniProtKB" id="P02144"/>
    </source>
</evidence>
<evidence type="ECO:0000250" key="2">
    <source>
        <dbReference type="UniProtKB" id="P02185"/>
    </source>
</evidence>
<evidence type="ECO:0000250" key="3">
    <source>
        <dbReference type="UniProtKB" id="P02189"/>
    </source>
</evidence>
<evidence type="ECO:0000250" key="4">
    <source>
        <dbReference type="UniProtKB" id="P68082"/>
    </source>
</evidence>
<evidence type="ECO:0000250" key="5">
    <source>
        <dbReference type="UniProtKB" id="Q9QZ76"/>
    </source>
</evidence>
<evidence type="ECO:0000255" key="6">
    <source>
        <dbReference type="PROSITE-ProRule" id="PRU00238"/>
    </source>
</evidence>
<comment type="function">
    <text evidence="1">Monomeric heme protein which primary function is to store oxygen and facilitate its diffusion within muscle tissues. Reversibly binds oxygen through a pentacoordinated heme iron and enables its timely and efficient release as needed during periods of heightened demand. Depending on the oxidative conditions of tissues and cells, and in addition to its ability to bind oxygen, it also has a nitrite reductase activity whereby it regulates the production of bioactive nitric oxide. Under stress conditions, like hypoxia and anoxia, it also protects cells against reactive oxygen species thanks to its pseudoperoxidase activity.</text>
</comment>
<comment type="catalytic activity">
    <reaction evidence="1">
        <text>Fe(III)-heme b-[protein] + nitric oxide + H2O = Fe(II)-heme b-[protein] + nitrite + 2 H(+)</text>
        <dbReference type="Rhea" id="RHEA:77711"/>
        <dbReference type="Rhea" id="RHEA-COMP:18975"/>
        <dbReference type="Rhea" id="RHEA-COMP:18976"/>
        <dbReference type="ChEBI" id="CHEBI:15377"/>
        <dbReference type="ChEBI" id="CHEBI:15378"/>
        <dbReference type="ChEBI" id="CHEBI:16301"/>
        <dbReference type="ChEBI" id="CHEBI:16480"/>
        <dbReference type="ChEBI" id="CHEBI:55376"/>
        <dbReference type="ChEBI" id="CHEBI:60344"/>
    </reaction>
    <physiologicalReaction direction="right-to-left" evidence="1">
        <dbReference type="Rhea" id="RHEA:77713"/>
    </physiologicalReaction>
</comment>
<comment type="catalytic activity">
    <reaction evidence="1">
        <text>H2O2 + AH2 = A + 2 H2O</text>
        <dbReference type="Rhea" id="RHEA:30275"/>
        <dbReference type="ChEBI" id="CHEBI:13193"/>
        <dbReference type="ChEBI" id="CHEBI:15377"/>
        <dbReference type="ChEBI" id="CHEBI:16240"/>
        <dbReference type="ChEBI" id="CHEBI:17499"/>
    </reaction>
</comment>
<comment type="subunit">
    <text evidence="2">Monomeric.</text>
</comment>
<comment type="subcellular location">
    <subcellularLocation>
        <location evidence="1">Cytoplasm</location>
        <location evidence="1">Sarcoplasm</location>
    </subcellularLocation>
</comment>
<comment type="similarity">
    <text evidence="6">Belongs to the globin family.</text>
</comment>
<organism>
    <name type="scientific">Equus quagga burchellii</name>
    <name type="common">Burchell's zebra</name>
    <name type="synonym">Equus burchelli</name>
    <dbReference type="NCBI Taxonomy" id="89252"/>
    <lineage>
        <taxon>Eukaryota</taxon>
        <taxon>Metazoa</taxon>
        <taxon>Chordata</taxon>
        <taxon>Craniata</taxon>
        <taxon>Vertebrata</taxon>
        <taxon>Euteleostomi</taxon>
        <taxon>Mammalia</taxon>
        <taxon>Eutheria</taxon>
        <taxon>Laurasiatheria</taxon>
        <taxon>Perissodactyla</taxon>
        <taxon>Equidae</taxon>
        <taxon>Equus</taxon>
        <taxon>Equus quagga</taxon>
    </lineage>
</organism>
<sequence>MGLSDGEWQQVLNVWGKVEADIAGHGQEVLIRLFTGHPETLEKFDKFKHLKTEAEMKASEDLKKHGTVVLTALGGILKKKGHHEAELKPLAQSHATKHKIPIKYLEFISDAIIHVLHSKHPGDFGADAQGAMTKALELFRNDIAAKYKELGFQG</sequence>
<gene>
    <name type="primary">MB</name>
</gene>
<accession>P68083</accession>
<accession>P02188</accession>
<proteinExistence type="evidence at protein level"/>
<keyword id="KW-0963">Cytoplasm</keyword>
<keyword id="KW-0903">Direct protein sequencing</keyword>
<keyword id="KW-0349">Heme</keyword>
<keyword id="KW-0408">Iron</keyword>
<keyword id="KW-0479">Metal-binding</keyword>
<keyword id="KW-0514">Muscle protein</keyword>
<keyword id="KW-0560">Oxidoreductase</keyword>
<keyword id="KW-0561">Oxygen transport</keyword>
<keyword id="KW-0597">Phosphoprotein</keyword>
<keyword id="KW-0813">Transport</keyword>
<dbReference type="EC" id="1.7.-.-" evidence="1"/>
<dbReference type="EC" id="1.11.1.-" evidence="1"/>
<dbReference type="PIR" id="A90603">
    <property type="entry name" value="MYHOZ"/>
</dbReference>
<dbReference type="BMRB" id="P68083"/>
<dbReference type="SMR" id="P68083"/>
<dbReference type="PeptideAtlas" id="P68083"/>
<dbReference type="GO" id="GO:0070062">
    <property type="term" value="C:extracellular exosome"/>
    <property type="evidence" value="ECO:0007669"/>
    <property type="project" value="TreeGrafter"/>
</dbReference>
<dbReference type="GO" id="GO:0016528">
    <property type="term" value="C:sarcoplasm"/>
    <property type="evidence" value="ECO:0000250"/>
    <property type="project" value="UniProtKB"/>
</dbReference>
<dbReference type="GO" id="GO:0020037">
    <property type="term" value="F:heme binding"/>
    <property type="evidence" value="ECO:0007669"/>
    <property type="project" value="InterPro"/>
</dbReference>
<dbReference type="GO" id="GO:0046872">
    <property type="term" value="F:metal ion binding"/>
    <property type="evidence" value="ECO:0007669"/>
    <property type="project" value="UniProtKB-KW"/>
</dbReference>
<dbReference type="GO" id="GO:0098809">
    <property type="term" value="F:nitrite reductase activity"/>
    <property type="evidence" value="ECO:0000250"/>
    <property type="project" value="UniProtKB"/>
</dbReference>
<dbReference type="GO" id="GO:0019825">
    <property type="term" value="F:oxygen binding"/>
    <property type="evidence" value="ECO:0007669"/>
    <property type="project" value="InterPro"/>
</dbReference>
<dbReference type="GO" id="GO:0005344">
    <property type="term" value="F:oxygen carrier activity"/>
    <property type="evidence" value="ECO:0000250"/>
    <property type="project" value="UniProtKB"/>
</dbReference>
<dbReference type="GO" id="GO:0004601">
    <property type="term" value="F:peroxidase activity"/>
    <property type="evidence" value="ECO:0000250"/>
    <property type="project" value="UniProtKB"/>
</dbReference>
<dbReference type="GO" id="GO:0019430">
    <property type="term" value="P:removal of superoxide radicals"/>
    <property type="evidence" value="ECO:0000250"/>
    <property type="project" value="UniProtKB"/>
</dbReference>
<dbReference type="CDD" id="cd08926">
    <property type="entry name" value="Mb"/>
    <property type="match status" value="1"/>
</dbReference>
<dbReference type="Gene3D" id="6.10.140.2100">
    <property type="match status" value="1"/>
</dbReference>
<dbReference type="Gene3D" id="6.10.140.2110">
    <property type="match status" value="1"/>
</dbReference>
<dbReference type="InterPro" id="IPR000971">
    <property type="entry name" value="Globin"/>
</dbReference>
<dbReference type="InterPro" id="IPR009050">
    <property type="entry name" value="Globin-like_sf"/>
</dbReference>
<dbReference type="InterPro" id="IPR002335">
    <property type="entry name" value="Myoglobin"/>
</dbReference>
<dbReference type="PANTHER" id="PTHR47132">
    <property type="entry name" value="MYOGLOBIN"/>
    <property type="match status" value="1"/>
</dbReference>
<dbReference type="PANTHER" id="PTHR47132:SF1">
    <property type="entry name" value="MYOGLOBIN"/>
    <property type="match status" value="1"/>
</dbReference>
<dbReference type="Pfam" id="PF00042">
    <property type="entry name" value="Globin"/>
    <property type="match status" value="1"/>
</dbReference>
<dbReference type="PRINTS" id="PR00613">
    <property type="entry name" value="MYOGLOBIN"/>
</dbReference>
<dbReference type="SUPFAM" id="SSF46458">
    <property type="entry name" value="Globin-like"/>
    <property type="match status" value="1"/>
</dbReference>
<dbReference type="PROSITE" id="PS01033">
    <property type="entry name" value="GLOBIN"/>
    <property type="match status" value="1"/>
</dbReference>
<name>MYG_EQUQB</name>
<reference key="1">
    <citation type="journal article" date="1975" name="Biochim. Biophys. Acta">
        <title>Comparison of the myoglobin of the zebra (Equus burchelli) with that of the horse (Equus caballus).</title>
        <authorList>
            <person name="Darbre P.D."/>
            <person name="Romero-Herrera A.E."/>
            <person name="Lehmann H."/>
        </authorList>
    </citation>
    <scope>PARTIAL PROTEIN SEQUENCE</scope>
    <scope>AMINO-ACID COMPOSITION OF TRYPTIC AND PEPTIC PEPTIDES</scope>
</reference>
<feature type="chain" id="PRO_0000053291" description="Myoglobin">
    <location>
        <begin position="1"/>
        <end position="154"/>
    </location>
</feature>
<feature type="domain" description="Globin" evidence="6">
    <location>
        <begin position="2"/>
        <end position="148"/>
    </location>
</feature>
<feature type="binding site" evidence="4">
    <location>
        <position position="65"/>
    </location>
    <ligand>
        <name>nitrite</name>
        <dbReference type="ChEBI" id="CHEBI:16301"/>
    </ligand>
</feature>
<feature type="binding site" evidence="3 6">
    <location>
        <position position="65"/>
    </location>
    <ligand>
        <name>O2</name>
        <dbReference type="ChEBI" id="CHEBI:15379"/>
    </ligand>
</feature>
<feature type="binding site" description="proximal binding residue" evidence="1">
    <location>
        <position position="94"/>
    </location>
    <ligand>
        <name>heme b</name>
        <dbReference type="ChEBI" id="CHEBI:60344"/>
    </ligand>
    <ligandPart>
        <name>Fe</name>
        <dbReference type="ChEBI" id="CHEBI:18248"/>
    </ligandPart>
</feature>
<feature type="modified residue" description="Phosphoserine" evidence="5">
    <location>
        <position position="4"/>
    </location>
</feature>